<dbReference type="EMBL" id="AM747720">
    <property type="protein sequence ID" value="CAR52462.1"/>
    <property type="molecule type" value="Genomic_DNA"/>
</dbReference>
<dbReference type="RefSeq" id="WP_006493636.1">
    <property type="nucleotide sequence ID" value="NC_011000.1"/>
</dbReference>
<dbReference type="SMR" id="B4ED83"/>
<dbReference type="KEGG" id="bcj:BCAL2160"/>
<dbReference type="eggNOG" id="COG0249">
    <property type="taxonomic scope" value="Bacteria"/>
</dbReference>
<dbReference type="HOGENOM" id="CLU_002472_4_0_4"/>
<dbReference type="BioCyc" id="BCEN216591:G1G1V-2374-MONOMER"/>
<dbReference type="Proteomes" id="UP000001035">
    <property type="component" value="Chromosome 1"/>
</dbReference>
<dbReference type="GO" id="GO:0005829">
    <property type="term" value="C:cytosol"/>
    <property type="evidence" value="ECO:0007669"/>
    <property type="project" value="TreeGrafter"/>
</dbReference>
<dbReference type="GO" id="GO:0005524">
    <property type="term" value="F:ATP binding"/>
    <property type="evidence" value="ECO:0007669"/>
    <property type="project" value="UniProtKB-UniRule"/>
</dbReference>
<dbReference type="GO" id="GO:0140664">
    <property type="term" value="F:ATP-dependent DNA damage sensor activity"/>
    <property type="evidence" value="ECO:0007669"/>
    <property type="project" value="InterPro"/>
</dbReference>
<dbReference type="GO" id="GO:0003684">
    <property type="term" value="F:damaged DNA binding"/>
    <property type="evidence" value="ECO:0007669"/>
    <property type="project" value="UniProtKB-UniRule"/>
</dbReference>
<dbReference type="GO" id="GO:0030983">
    <property type="term" value="F:mismatched DNA binding"/>
    <property type="evidence" value="ECO:0007669"/>
    <property type="project" value="InterPro"/>
</dbReference>
<dbReference type="GO" id="GO:0006298">
    <property type="term" value="P:mismatch repair"/>
    <property type="evidence" value="ECO:0007669"/>
    <property type="project" value="UniProtKB-UniRule"/>
</dbReference>
<dbReference type="CDD" id="cd03284">
    <property type="entry name" value="ABC_MutS1"/>
    <property type="match status" value="1"/>
</dbReference>
<dbReference type="FunFam" id="3.40.1170.10:FF:000001">
    <property type="entry name" value="DNA mismatch repair protein MutS"/>
    <property type="match status" value="1"/>
</dbReference>
<dbReference type="FunFam" id="3.40.50.300:FF:000870">
    <property type="entry name" value="MutS protein homolog 4"/>
    <property type="match status" value="1"/>
</dbReference>
<dbReference type="Gene3D" id="1.10.1420.10">
    <property type="match status" value="2"/>
</dbReference>
<dbReference type="Gene3D" id="6.10.140.430">
    <property type="match status" value="1"/>
</dbReference>
<dbReference type="Gene3D" id="3.40.1170.10">
    <property type="entry name" value="DNA repair protein MutS, domain I"/>
    <property type="match status" value="1"/>
</dbReference>
<dbReference type="Gene3D" id="3.30.420.110">
    <property type="entry name" value="MutS, connector domain"/>
    <property type="match status" value="1"/>
</dbReference>
<dbReference type="Gene3D" id="3.40.50.300">
    <property type="entry name" value="P-loop containing nucleotide triphosphate hydrolases"/>
    <property type="match status" value="1"/>
</dbReference>
<dbReference type="HAMAP" id="MF_00096">
    <property type="entry name" value="MutS"/>
    <property type="match status" value="1"/>
</dbReference>
<dbReference type="InterPro" id="IPR005748">
    <property type="entry name" value="DNA_mismatch_repair_MutS"/>
</dbReference>
<dbReference type="InterPro" id="IPR007695">
    <property type="entry name" value="DNA_mismatch_repair_MutS-lik_N"/>
</dbReference>
<dbReference type="InterPro" id="IPR017261">
    <property type="entry name" value="DNA_mismatch_repair_MutS/MSH"/>
</dbReference>
<dbReference type="InterPro" id="IPR000432">
    <property type="entry name" value="DNA_mismatch_repair_MutS_C"/>
</dbReference>
<dbReference type="InterPro" id="IPR007861">
    <property type="entry name" value="DNA_mismatch_repair_MutS_clamp"/>
</dbReference>
<dbReference type="InterPro" id="IPR007696">
    <property type="entry name" value="DNA_mismatch_repair_MutS_core"/>
</dbReference>
<dbReference type="InterPro" id="IPR016151">
    <property type="entry name" value="DNA_mismatch_repair_MutS_N"/>
</dbReference>
<dbReference type="InterPro" id="IPR036187">
    <property type="entry name" value="DNA_mismatch_repair_MutS_sf"/>
</dbReference>
<dbReference type="InterPro" id="IPR007860">
    <property type="entry name" value="DNA_mmatch_repair_MutS_con_dom"/>
</dbReference>
<dbReference type="InterPro" id="IPR045076">
    <property type="entry name" value="MutS"/>
</dbReference>
<dbReference type="InterPro" id="IPR036678">
    <property type="entry name" value="MutS_con_dom_sf"/>
</dbReference>
<dbReference type="InterPro" id="IPR027417">
    <property type="entry name" value="P-loop_NTPase"/>
</dbReference>
<dbReference type="NCBIfam" id="TIGR01070">
    <property type="entry name" value="mutS1"/>
    <property type="match status" value="1"/>
</dbReference>
<dbReference type="NCBIfam" id="NF003810">
    <property type="entry name" value="PRK05399.1"/>
    <property type="match status" value="1"/>
</dbReference>
<dbReference type="PANTHER" id="PTHR11361:SF34">
    <property type="entry name" value="DNA MISMATCH REPAIR PROTEIN MSH1, MITOCHONDRIAL"/>
    <property type="match status" value="1"/>
</dbReference>
<dbReference type="PANTHER" id="PTHR11361">
    <property type="entry name" value="DNA MISMATCH REPAIR PROTEIN MUTS FAMILY MEMBER"/>
    <property type="match status" value="1"/>
</dbReference>
<dbReference type="Pfam" id="PF01624">
    <property type="entry name" value="MutS_I"/>
    <property type="match status" value="1"/>
</dbReference>
<dbReference type="Pfam" id="PF05188">
    <property type="entry name" value="MutS_II"/>
    <property type="match status" value="1"/>
</dbReference>
<dbReference type="Pfam" id="PF05192">
    <property type="entry name" value="MutS_III"/>
    <property type="match status" value="1"/>
</dbReference>
<dbReference type="Pfam" id="PF05190">
    <property type="entry name" value="MutS_IV"/>
    <property type="match status" value="1"/>
</dbReference>
<dbReference type="Pfam" id="PF00488">
    <property type="entry name" value="MutS_V"/>
    <property type="match status" value="1"/>
</dbReference>
<dbReference type="PIRSF" id="PIRSF037677">
    <property type="entry name" value="DNA_mis_repair_Msh6"/>
    <property type="match status" value="1"/>
</dbReference>
<dbReference type="SMART" id="SM00534">
    <property type="entry name" value="MUTSac"/>
    <property type="match status" value="1"/>
</dbReference>
<dbReference type="SMART" id="SM00533">
    <property type="entry name" value="MUTSd"/>
    <property type="match status" value="1"/>
</dbReference>
<dbReference type="SUPFAM" id="SSF55271">
    <property type="entry name" value="DNA repair protein MutS, domain I"/>
    <property type="match status" value="1"/>
</dbReference>
<dbReference type="SUPFAM" id="SSF53150">
    <property type="entry name" value="DNA repair protein MutS, domain II"/>
    <property type="match status" value="1"/>
</dbReference>
<dbReference type="SUPFAM" id="SSF48334">
    <property type="entry name" value="DNA repair protein MutS, domain III"/>
    <property type="match status" value="1"/>
</dbReference>
<dbReference type="SUPFAM" id="SSF52540">
    <property type="entry name" value="P-loop containing nucleoside triphosphate hydrolases"/>
    <property type="match status" value="1"/>
</dbReference>
<dbReference type="PROSITE" id="PS00486">
    <property type="entry name" value="DNA_MISMATCH_REPAIR_2"/>
    <property type="match status" value="1"/>
</dbReference>
<name>MUTS_BURCJ</name>
<sequence length="885" mass="95987">MTTLSPEAFAGHTPMMQQYLRIKADHPDTLVFYRMGDFYELFFEDAEKAARLLDLTLTQRGASAGTPIKMAGVPHHAVEQYLAKLVKMGESVAICEQIGDPATSKGPVERKVVRVVTPGTLTDAALLSDKNDVYLLAMCTGHNKRGVAVNIGLAWLNLASGALRLAEIESEQLAAALERIRPAEILTPDGATDAIPAGAGASKRVPAWHFDIASGTQRLCDQLDVASLDGFGAHSLTSACGAAGALLLYAAATQGQQLRHVRSLKVENETEYIGLDPATRRNLELTETLRGTESPTLYSLLDTCCTTMGSRLLRHWLHHPPRASVAAQSRQQAIGALLDAPANASLDALRSALRQIADVERITGRLALLSARPRDLSSLRDTFAALPALRERISAIVANADALARVDAALAPPAECLDLLTSAIATEPAAMVRDGGVIARGYDAELDELRDISENCGQFLIDLEARERARTGIANLRVEYNKVHGFYIEVTRGQTDKVPDDYRRRQTLKNAERYITPELKTFEDKALSAQERALARERALYDSVLQALLPFIPECQRVASALAELDLLAAFAERARALDWVAPTFTDEIGIEIEQGRHPVVEAQVEQFIANDCRFGPERKLLLITGPNMGGKSTFMRQTALIALMAYVGSYVPAKSACFGPIDRIFTRIGAADDLAGGRSTFMVEMTEAAAILNDATPQSLVLMDEIGRGTSTFDGLALAWAIARHLLAHNACYTLFATHYFELTQLPAEFPQAANVHLSAVEHGHGIVFLHAVNEGPANQSYGLQVAQLAGVPAPVIRAARKHLAYLEQQSASQHTPQLDLFSAPPAAIDDLECADAPALPDTPHPALEKLRDIDPDDLKPREALDLLYELRTLVRSHDADGHA</sequence>
<organism>
    <name type="scientific">Burkholderia cenocepacia (strain ATCC BAA-245 / DSM 16553 / LMG 16656 / NCTC 13227 / J2315 / CF5610)</name>
    <name type="common">Burkholderia cepacia (strain J2315)</name>
    <dbReference type="NCBI Taxonomy" id="216591"/>
    <lineage>
        <taxon>Bacteria</taxon>
        <taxon>Pseudomonadati</taxon>
        <taxon>Pseudomonadota</taxon>
        <taxon>Betaproteobacteria</taxon>
        <taxon>Burkholderiales</taxon>
        <taxon>Burkholderiaceae</taxon>
        <taxon>Burkholderia</taxon>
        <taxon>Burkholderia cepacia complex</taxon>
    </lineage>
</organism>
<feature type="chain" id="PRO_1000093611" description="DNA mismatch repair protein MutS">
    <location>
        <begin position="1"/>
        <end position="885"/>
    </location>
</feature>
<feature type="binding site" evidence="1">
    <location>
        <begin position="626"/>
        <end position="633"/>
    </location>
    <ligand>
        <name>ATP</name>
        <dbReference type="ChEBI" id="CHEBI:30616"/>
    </ligand>
</feature>
<evidence type="ECO:0000255" key="1">
    <source>
        <dbReference type="HAMAP-Rule" id="MF_00096"/>
    </source>
</evidence>
<comment type="function">
    <text evidence="1">This protein is involved in the repair of mismatches in DNA. It is possible that it carries out the mismatch recognition step. This protein has a weak ATPase activity.</text>
</comment>
<comment type="similarity">
    <text evidence="1">Belongs to the DNA mismatch repair MutS family.</text>
</comment>
<gene>
    <name evidence="1" type="primary">mutS</name>
    <name type="ordered locus">BceJ2315_21240</name>
    <name type="ORF">BCAL2160</name>
</gene>
<proteinExistence type="inferred from homology"/>
<accession>B4ED83</accession>
<keyword id="KW-0067">ATP-binding</keyword>
<keyword id="KW-0227">DNA damage</keyword>
<keyword id="KW-0234">DNA repair</keyword>
<keyword id="KW-0238">DNA-binding</keyword>
<keyword id="KW-0547">Nucleotide-binding</keyword>
<reference key="1">
    <citation type="journal article" date="2009" name="J. Bacteriol.">
        <title>The genome of Burkholderia cenocepacia J2315, an epidemic pathogen of cystic fibrosis patients.</title>
        <authorList>
            <person name="Holden M.T."/>
            <person name="Seth-Smith H.M."/>
            <person name="Crossman L.C."/>
            <person name="Sebaihia M."/>
            <person name="Bentley S.D."/>
            <person name="Cerdeno-Tarraga A.M."/>
            <person name="Thomson N.R."/>
            <person name="Bason N."/>
            <person name="Quail M.A."/>
            <person name="Sharp S."/>
            <person name="Cherevach I."/>
            <person name="Churcher C."/>
            <person name="Goodhead I."/>
            <person name="Hauser H."/>
            <person name="Holroyd N."/>
            <person name="Mungall K."/>
            <person name="Scott P."/>
            <person name="Walker D."/>
            <person name="White B."/>
            <person name="Rose H."/>
            <person name="Iversen P."/>
            <person name="Mil-Homens D."/>
            <person name="Rocha E.P."/>
            <person name="Fialho A.M."/>
            <person name="Baldwin A."/>
            <person name="Dowson C."/>
            <person name="Barrell B.G."/>
            <person name="Govan J.R."/>
            <person name="Vandamme P."/>
            <person name="Hart C.A."/>
            <person name="Mahenthiralingam E."/>
            <person name="Parkhill J."/>
        </authorList>
    </citation>
    <scope>NUCLEOTIDE SEQUENCE [LARGE SCALE GENOMIC DNA]</scope>
    <source>
        <strain>ATCC BAA-245 / DSM 16553 / LMG 16656 / NCTC 13227 / J2315 / CF5610</strain>
    </source>
</reference>
<protein>
    <recommendedName>
        <fullName evidence="1">DNA mismatch repair protein MutS</fullName>
    </recommendedName>
</protein>